<accession>Q3Z970</accession>
<gene>
    <name evidence="1" type="primary">rplX</name>
    <name type="ordered locus">DET0485</name>
</gene>
<reference key="1">
    <citation type="journal article" date="2005" name="Science">
        <title>Genome sequence of the PCE-dechlorinating bacterium Dehalococcoides ethenogenes.</title>
        <authorList>
            <person name="Seshadri R."/>
            <person name="Adrian L."/>
            <person name="Fouts D.E."/>
            <person name="Eisen J.A."/>
            <person name="Phillippy A.M."/>
            <person name="Methe B.A."/>
            <person name="Ward N.L."/>
            <person name="Nelson W.C."/>
            <person name="DeBoy R.T."/>
            <person name="Khouri H.M."/>
            <person name="Kolonay J.F."/>
            <person name="Dodson R.J."/>
            <person name="Daugherty S.C."/>
            <person name="Brinkac L.M."/>
            <person name="Sullivan S.A."/>
            <person name="Madupu R."/>
            <person name="Nelson K.E."/>
            <person name="Kang K.H."/>
            <person name="Impraim M."/>
            <person name="Tran K."/>
            <person name="Robinson J.M."/>
            <person name="Forberger H.A."/>
            <person name="Fraser C.M."/>
            <person name="Zinder S.H."/>
            <person name="Heidelberg J.F."/>
        </authorList>
    </citation>
    <scope>NUCLEOTIDE SEQUENCE [LARGE SCALE GENOMIC DNA]</scope>
    <source>
        <strain>ATCC BAA-2266 / KCTC 15142 / 195</strain>
    </source>
</reference>
<sequence>MRLKKNDNVLVIAGKDKGKTGKVRYAFPRTDRVLVEGVNMIKRHSRARGQAKQAGIIEREAPLHVSNLMLLCSKCNKPARIGSRELADGKSVRYCKSCNEVID</sequence>
<proteinExistence type="inferred from homology"/>
<name>RL24_DEHM1</name>
<feature type="chain" id="PRO_0000241590" description="Large ribosomal subunit protein uL24">
    <location>
        <begin position="1"/>
        <end position="103"/>
    </location>
</feature>
<organism>
    <name type="scientific">Dehalococcoides mccartyi (strain ATCC BAA-2266 / KCTC 15142 / 195)</name>
    <name type="common">Dehalococcoides ethenogenes (strain 195)</name>
    <dbReference type="NCBI Taxonomy" id="243164"/>
    <lineage>
        <taxon>Bacteria</taxon>
        <taxon>Bacillati</taxon>
        <taxon>Chloroflexota</taxon>
        <taxon>Dehalococcoidia</taxon>
        <taxon>Dehalococcoidales</taxon>
        <taxon>Dehalococcoidaceae</taxon>
        <taxon>Dehalococcoides</taxon>
    </lineage>
</organism>
<keyword id="KW-0687">Ribonucleoprotein</keyword>
<keyword id="KW-0689">Ribosomal protein</keyword>
<keyword id="KW-0694">RNA-binding</keyword>
<keyword id="KW-0699">rRNA-binding</keyword>
<evidence type="ECO:0000255" key="1">
    <source>
        <dbReference type="HAMAP-Rule" id="MF_01326"/>
    </source>
</evidence>
<evidence type="ECO:0000305" key="2"/>
<protein>
    <recommendedName>
        <fullName evidence="1">Large ribosomal subunit protein uL24</fullName>
    </recommendedName>
    <alternativeName>
        <fullName evidence="2">50S ribosomal protein L24</fullName>
    </alternativeName>
</protein>
<comment type="function">
    <text evidence="1">One of two assembly initiator proteins, it binds directly to the 5'-end of the 23S rRNA, where it nucleates assembly of the 50S subunit.</text>
</comment>
<comment type="function">
    <text evidence="1">One of the proteins that surrounds the polypeptide exit tunnel on the outside of the subunit.</text>
</comment>
<comment type="subunit">
    <text evidence="1">Part of the 50S ribosomal subunit.</text>
</comment>
<comment type="similarity">
    <text evidence="1">Belongs to the universal ribosomal protein uL24 family.</text>
</comment>
<dbReference type="EMBL" id="CP000027">
    <property type="protein sequence ID" value="AAW40280.1"/>
    <property type="molecule type" value="Genomic_DNA"/>
</dbReference>
<dbReference type="RefSeq" id="WP_010936262.1">
    <property type="nucleotide sequence ID" value="NC_002936.3"/>
</dbReference>
<dbReference type="SMR" id="Q3Z970"/>
<dbReference type="FunCoup" id="Q3Z970">
    <property type="interactions" value="348"/>
</dbReference>
<dbReference type="STRING" id="243164.DET0485"/>
<dbReference type="GeneID" id="3230244"/>
<dbReference type="KEGG" id="det:DET0485"/>
<dbReference type="eggNOG" id="COG0198">
    <property type="taxonomic scope" value="Bacteria"/>
</dbReference>
<dbReference type="HOGENOM" id="CLU_093315_2_3_0"/>
<dbReference type="InParanoid" id="Q3Z970"/>
<dbReference type="Proteomes" id="UP000008289">
    <property type="component" value="Chromosome"/>
</dbReference>
<dbReference type="GO" id="GO:1990904">
    <property type="term" value="C:ribonucleoprotein complex"/>
    <property type="evidence" value="ECO:0007669"/>
    <property type="project" value="UniProtKB-KW"/>
</dbReference>
<dbReference type="GO" id="GO:0005840">
    <property type="term" value="C:ribosome"/>
    <property type="evidence" value="ECO:0007669"/>
    <property type="project" value="UniProtKB-KW"/>
</dbReference>
<dbReference type="GO" id="GO:0019843">
    <property type="term" value="F:rRNA binding"/>
    <property type="evidence" value="ECO:0007669"/>
    <property type="project" value="UniProtKB-UniRule"/>
</dbReference>
<dbReference type="GO" id="GO:0003735">
    <property type="term" value="F:structural constituent of ribosome"/>
    <property type="evidence" value="ECO:0007669"/>
    <property type="project" value="InterPro"/>
</dbReference>
<dbReference type="GO" id="GO:0006412">
    <property type="term" value="P:translation"/>
    <property type="evidence" value="ECO:0007669"/>
    <property type="project" value="UniProtKB-UniRule"/>
</dbReference>
<dbReference type="CDD" id="cd06089">
    <property type="entry name" value="KOW_RPL26"/>
    <property type="match status" value="1"/>
</dbReference>
<dbReference type="FunFam" id="2.30.30.30:FF:000004">
    <property type="entry name" value="50S ribosomal protein L24"/>
    <property type="match status" value="1"/>
</dbReference>
<dbReference type="Gene3D" id="2.30.30.30">
    <property type="match status" value="1"/>
</dbReference>
<dbReference type="HAMAP" id="MF_01326_B">
    <property type="entry name" value="Ribosomal_uL24_B"/>
    <property type="match status" value="1"/>
</dbReference>
<dbReference type="InterPro" id="IPR005824">
    <property type="entry name" value="KOW"/>
</dbReference>
<dbReference type="InterPro" id="IPR014722">
    <property type="entry name" value="Rib_uL2_dom2"/>
</dbReference>
<dbReference type="InterPro" id="IPR003256">
    <property type="entry name" value="Ribosomal_uL24"/>
</dbReference>
<dbReference type="InterPro" id="IPR005825">
    <property type="entry name" value="Ribosomal_uL24_CS"/>
</dbReference>
<dbReference type="InterPro" id="IPR041988">
    <property type="entry name" value="Ribosomal_uL24_KOW"/>
</dbReference>
<dbReference type="InterPro" id="IPR008991">
    <property type="entry name" value="Translation_prot_SH3-like_sf"/>
</dbReference>
<dbReference type="NCBIfam" id="TIGR01079">
    <property type="entry name" value="rplX_bact"/>
    <property type="match status" value="1"/>
</dbReference>
<dbReference type="PANTHER" id="PTHR12903">
    <property type="entry name" value="MITOCHONDRIAL RIBOSOMAL PROTEIN L24"/>
    <property type="match status" value="1"/>
</dbReference>
<dbReference type="Pfam" id="PF00467">
    <property type="entry name" value="KOW"/>
    <property type="match status" value="1"/>
</dbReference>
<dbReference type="Pfam" id="PF17136">
    <property type="entry name" value="ribosomal_L24"/>
    <property type="match status" value="1"/>
</dbReference>
<dbReference type="SMART" id="SM00739">
    <property type="entry name" value="KOW"/>
    <property type="match status" value="1"/>
</dbReference>
<dbReference type="SUPFAM" id="SSF50104">
    <property type="entry name" value="Translation proteins SH3-like domain"/>
    <property type="match status" value="1"/>
</dbReference>
<dbReference type="PROSITE" id="PS01108">
    <property type="entry name" value="RIBOSOMAL_L24"/>
    <property type="match status" value="1"/>
</dbReference>